<gene>
    <name evidence="1" type="primary">rpsO</name>
    <name type="ordered locus">Dshi_2994</name>
</gene>
<feature type="chain" id="PRO_1000086799" description="Small ribosomal subunit protein uS15">
    <location>
        <begin position="1"/>
        <end position="89"/>
    </location>
</feature>
<proteinExistence type="inferred from homology"/>
<keyword id="KW-1185">Reference proteome</keyword>
<keyword id="KW-0687">Ribonucleoprotein</keyword>
<keyword id="KW-0689">Ribosomal protein</keyword>
<keyword id="KW-0694">RNA-binding</keyword>
<keyword id="KW-0699">rRNA-binding</keyword>
<comment type="function">
    <text evidence="1">One of the primary rRNA binding proteins, it binds directly to 16S rRNA where it helps nucleate assembly of the platform of the 30S subunit by binding and bridging several RNA helices of the 16S rRNA.</text>
</comment>
<comment type="function">
    <text evidence="1">Forms an intersubunit bridge (bridge B4) with the 23S rRNA of the 50S subunit in the ribosome.</text>
</comment>
<comment type="subunit">
    <text evidence="1">Part of the 30S ribosomal subunit. Forms a bridge to the 50S subunit in the 70S ribosome, contacting the 23S rRNA.</text>
</comment>
<comment type="similarity">
    <text evidence="1">Belongs to the universal ribosomal protein uS15 family.</text>
</comment>
<protein>
    <recommendedName>
        <fullName evidence="1">Small ribosomal subunit protein uS15</fullName>
    </recommendedName>
    <alternativeName>
        <fullName evidence="2">30S ribosomal protein S15</fullName>
    </alternativeName>
</protein>
<name>RS15_DINSH</name>
<accession>A8LKE4</accession>
<dbReference type="EMBL" id="CP000830">
    <property type="protein sequence ID" value="ABV94727.1"/>
    <property type="molecule type" value="Genomic_DNA"/>
</dbReference>
<dbReference type="RefSeq" id="WP_012179655.1">
    <property type="nucleotide sequence ID" value="NC_009952.1"/>
</dbReference>
<dbReference type="SMR" id="A8LKE4"/>
<dbReference type="STRING" id="398580.Dshi_2994"/>
<dbReference type="KEGG" id="dsh:Dshi_2994"/>
<dbReference type="eggNOG" id="COG0184">
    <property type="taxonomic scope" value="Bacteria"/>
</dbReference>
<dbReference type="HOGENOM" id="CLU_148518_0_0_5"/>
<dbReference type="OrthoDB" id="9799262at2"/>
<dbReference type="Proteomes" id="UP000006833">
    <property type="component" value="Chromosome"/>
</dbReference>
<dbReference type="GO" id="GO:0022627">
    <property type="term" value="C:cytosolic small ribosomal subunit"/>
    <property type="evidence" value="ECO:0007669"/>
    <property type="project" value="TreeGrafter"/>
</dbReference>
<dbReference type="GO" id="GO:0019843">
    <property type="term" value="F:rRNA binding"/>
    <property type="evidence" value="ECO:0007669"/>
    <property type="project" value="UniProtKB-UniRule"/>
</dbReference>
<dbReference type="GO" id="GO:0003735">
    <property type="term" value="F:structural constituent of ribosome"/>
    <property type="evidence" value="ECO:0007669"/>
    <property type="project" value="InterPro"/>
</dbReference>
<dbReference type="GO" id="GO:0006412">
    <property type="term" value="P:translation"/>
    <property type="evidence" value="ECO:0007669"/>
    <property type="project" value="UniProtKB-UniRule"/>
</dbReference>
<dbReference type="CDD" id="cd00353">
    <property type="entry name" value="Ribosomal_S15p_S13e"/>
    <property type="match status" value="1"/>
</dbReference>
<dbReference type="FunFam" id="1.10.287.10:FF:000002">
    <property type="entry name" value="30S ribosomal protein S15"/>
    <property type="match status" value="1"/>
</dbReference>
<dbReference type="Gene3D" id="6.10.250.3130">
    <property type="match status" value="1"/>
</dbReference>
<dbReference type="Gene3D" id="1.10.287.10">
    <property type="entry name" value="S15/NS1, RNA-binding"/>
    <property type="match status" value="1"/>
</dbReference>
<dbReference type="HAMAP" id="MF_01343_B">
    <property type="entry name" value="Ribosomal_uS15_B"/>
    <property type="match status" value="1"/>
</dbReference>
<dbReference type="InterPro" id="IPR000589">
    <property type="entry name" value="Ribosomal_uS15"/>
</dbReference>
<dbReference type="InterPro" id="IPR005290">
    <property type="entry name" value="Ribosomal_uS15_bac-type"/>
</dbReference>
<dbReference type="InterPro" id="IPR009068">
    <property type="entry name" value="uS15_NS1_RNA-bd_sf"/>
</dbReference>
<dbReference type="NCBIfam" id="TIGR00952">
    <property type="entry name" value="S15_bact"/>
    <property type="match status" value="1"/>
</dbReference>
<dbReference type="PANTHER" id="PTHR23321">
    <property type="entry name" value="RIBOSOMAL PROTEIN S15, BACTERIAL AND ORGANELLAR"/>
    <property type="match status" value="1"/>
</dbReference>
<dbReference type="PANTHER" id="PTHR23321:SF26">
    <property type="entry name" value="SMALL RIBOSOMAL SUBUNIT PROTEIN US15M"/>
    <property type="match status" value="1"/>
</dbReference>
<dbReference type="Pfam" id="PF00312">
    <property type="entry name" value="Ribosomal_S15"/>
    <property type="match status" value="1"/>
</dbReference>
<dbReference type="SMART" id="SM01387">
    <property type="entry name" value="Ribosomal_S15"/>
    <property type="match status" value="1"/>
</dbReference>
<dbReference type="SUPFAM" id="SSF47060">
    <property type="entry name" value="S15/NS1 RNA-binding domain"/>
    <property type="match status" value="1"/>
</dbReference>
<dbReference type="PROSITE" id="PS00362">
    <property type="entry name" value="RIBOSOMAL_S15"/>
    <property type="match status" value="1"/>
</dbReference>
<sequence length="89" mass="10200">MSITAEEKARLIKEYATKEGDTGSPEVQIAILSSRIATLTEHFKSHKKDNHSRRGLLMMVAQRRKLLDYVKGKDEARYQKLISSLGLRR</sequence>
<organism>
    <name type="scientific">Dinoroseobacter shibae (strain DSM 16493 / NCIMB 14021 / DFL 12)</name>
    <dbReference type="NCBI Taxonomy" id="398580"/>
    <lineage>
        <taxon>Bacteria</taxon>
        <taxon>Pseudomonadati</taxon>
        <taxon>Pseudomonadota</taxon>
        <taxon>Alphaproteobacteria</taxon>
        <taxon>Rhodobacterales</taxon>
        <taxon>Roseobacteraceae</taxon>
        <taxon>Dinoroseobacter</taxon>
    </lineage>
</organism>
<evidence type="ECO:0000255" key="1">
    <source>
        <dbReference type="HAMAP-Rule" id="MF_01343"/>
    </source>
</evidence>
<evidence type="ECO:0000305" key="2"/>
<reference key="1">
    <citation type="journal article" date="2010" name="ISME J.">
        <title>The complete genome sequence of the algal symbiont Dinoroseobacter shibae: a hitchhiker's guide to life in the sea.</title>
        <authorList>
            <person name="Wagner-Dobler I."/>
            <person name="Ballhausen B."/>
            <person name="Berger M."/>
            <person name="Brinkhoff T."/>
            <person name="Buchholz I."/>
            <person name="Bunk B."/>
            <person name="Cypionka H."/>
            <person name="Daniel R."/>
            <person name="Drepper T."/>
            <person name="Gerdts G."/>
            <person name="Hahnke S."/>
            <person name="Han C."/>
            <person name="Jahn D."/>
            <person name="Kalhoefer D."/>
            <person name="Kiss H."/>
            <person name="Klenk H.P."/>
            <person name="Kyrpides N."/>
            <person name="Liebl W."/>
            <person name="Liesegang H."/>
            <person name="Meincke L."/>
            <person name="Pati A."/>
            <person name="Petersen J."/>
            <person name="Piekarski T."/>
            <person name="Pommerenke C."/>
            <person name="Pradella S."/>
            <person name="Pukall R."/>
            <person name="Rabus R."/>
            <person name="Stackebrandt E."/>
            <person name="Thole S."/>
            <person name="Thompson L."/>
            <person name="Tielen P."/>
            <person name="Tomasch J."/>
            <person name="von Jan M."/>
            <person name="Wanphrut N."/>
            <person name="Wichels A."/>
            <person name="Zech H."/>
            <person name="Simon M."/>
        </authorList>
    </citation>
    <scope>NUCLEOTIDE SEQUENCE [LARGE SCALE GENOMIC DNA]</scope>
    <source>
        <strain>DSM 16493 / NCIMB 14021 / DFL 12</strain>
    </source>
</reference>